<proteinExistence type="evidence at protein level"/>
<reference key="1">
    <citation type="journal article" date="1990" name="J. Biol. Chem.">
        <title>Antimicrobial tachyplesin peptide precursor. cDNA cloning and cellular localization in the horseshoe crab (Tachypleus tridentatus).</title>
        <authorList>
            <person name="Shigenaga T."/>
            <person name="Muta T."/>
            <person name="Toh Y."/>
            <person name="Tokunaga F."/>
            <person name="Iwanaga S."/>
        </authorList>
    </citation>
    <scope>NUCLEOTIDE SEQUENCE [MRNA]</scope>
</reference>
<reference key="2">
    <citation type="journal article" date="1988" name="J. Biol. Chem.">
        <title>Tachyplesin, a class of antimicrobial peptide from the hemocytes of the horseshoe crab (Tachypleus tridentatus). Isolation and chemical structure.</title>
        <authorList>
            <person name="Nakamura T."/>
            <person name="Furunaka H."/>
            <person name="Miyata T."/>
            <person name="Tokunaga F."/>
            <person name="Muta T."/>
            <person name="Iwanaga S."/>
            <person name="Niwa M."/>
            <person name="Takao T."/>
            <person name="Shimonishi Y."/>
        </authorList>
    </citation>
    <scope>PROTEIN SEQUENCE OF 24-40</scope>
    <scope>AMIDATION AT ARG-40</scope>
    <scope>DISULFIDE BONDS</scope>
</reference>
<reference key="3">
    <citation type="journal article" date="1990" name="J. Biol. Chem.">
        <title>Antimicrobial peptide, tachyplesin I, isolated from hemocytes of the horseshoe crab (Tachypleus tridentatus). NMR determination of the beta-sheet structure.</title>
        <authorList>
            <person name="Kawano K."/>
            <person name="Yoneya T."/>
            <person name="Miyata T."/>
            <person name="Yoshikawa K."/>
            <person name="Tokunaga F."/>
            <person name="Terada Y."/>
            <person name="Iwanaga S."/>
        </authorList>
    </citation>
    <scope>STRUCTURE BY NMR OF 24-40</scope>
</reference>
<reference key="4">
    <citation type="journal article" date="1993" name="Biochim. Biophys. Acta">
        <title>A comparative study of the solution structures of tachyplesin I and a novel anti-HIV synthetic peptide, T22 ([Tyr5,12, Lys7]-polyphemusin II), determined by nuclear magnetic resonance.</title>
        <authorList>
            <person name="Tamamura H."/>
            <person name="Kuroda M."/>
            <person name="Masuda M."/>
            <person name="Otaka A."/>
            <person name="Funakoshi S."/>
            <person name="Nakashima H."/>
            <person name="Yamamoto N."/>
            <person name="Waki M."/>
            <person name="Matsumoto A."/>
            <person name="Lancelin J.-M."/>
            <person name="Kohda D."/>
            <person name="Tate S."/>
            <person name="Inagaki F."/>
            <person name="Fujii N."/>
        </authorList>
    </citation>
    <scope>STRUCTURE BY NMR OF 24-40</scope>
</reference>
<reference key="5">
    <citation type="journal article" date="1993" name="J. Biochem.">
        <title>Separation of large and small granules from horseshoe crab (Tachypleus tridentatus) hemocytes and characterization of their components.</title>
        <authorList>
            <person name="Shigenaga T."/>
            <person name="Takayenoki Y."/>
            <person name="Kawasaki S."/>
            <person name="Seki N."/>
            <person name="Muta T."/>
            <person name="Toh Y."/>
            <person name="Ito A."/>
            <person name="Iwanaga S."/>
        </authorList>
    </citation>
    <scope>CHARACTERIZATION</scope>
</reference>
<sequence length="77" mass="9349">MKKLVIALCLMMVLAVMVEEAEAKWCFRVCYRGICYRRCRGKRNEVRQYRDRGYDVRAIPEETFFTRQDEDEDDDEE</sequence>
<protein>
    <recommendedName>
        <fullName>Tachyplesin-1</fullName>
    </recommendedName>
    <alternativeName>
        <fullName>Tachyplesin I</fullName>
    </alternativeName>
</protein>
<feature type="signal peptide" evidence="1">
    <location>
        <begin position="1"/>
        <end position="23"/>
    </location>
</feature>
<feature type="peptide" id="PRO_0000033576" description="Tachyplesin-1">
    <location>
        <begin position="24"/>
        <end position="40"/>
    </location>
</feature>
<feature type="propeptide" id="PRO_0000033577">
    <location>
        <begin position="41"/>
        <end position="77"/>
    </location>
</feature>
<feature type="modified residue" description="Arginine amide" evidence="1">
    <location>
        <position position="40"/>
    </location>
</feature>
<feature type="disulfide bond" evidence="1">
    <location>
        <begin position="26"/>
        <end position="39"/>
    </location>
</feature>
<feature type="disulfide bond" evidence="1">
    <location>
        <begin position="30"/>
        <end position="35"/>
    </location>
</feature>
<feature type="strand" evidence="3">
    <location>
        <begin position="29"/>
        <end position="31"/>
    </location>
</feature>
<feature type="strand" evidence="3">
    <location>
        <begin position="34"/>
        <end position="36"/>
    </location>
</feature>
<dbReference type="EMBL" id="M57242">
    <property type="protein sequence ID" value="AAA63538.1"/>
    <property type="molecule type" value="mRNA"/>
</dbReference>
<dbReference type="PIR" id="A38345">
    <property type="entry name" value="A38345"/>
</dbReference>
<dbReference type="PDB" id="1MA2">
    <property type="method" value="NMR"/>
    <property type="chains" value="A=24-40"/>
</dbReference>
<dbReference type="PDB" id="1MA4">
    <property type="method" value="NMR"/>
    <property type="chains" value="A=24-40"/>
</dbReference>
<dbReference type="PDB" id="1MA5">
    <property type="method" value="NMR"/>
    <property type="chains" value="A=24-40"/>
</dbReference>
<dbReference type="PDB" id="1MA6">
    <property type="method" value="NMR"/>
    <property type="chains" value="A=24-40"/>
</dbReference>
<dbReference type="PDB" id="1WO0">
    <property type="method" value="NMR"/>
    <property type="chains" value="A=24-40"/>
</dbReference>
<dbReference type="PDB" id="1WO1">
    <property type="method" value="NMR"/>
    <property type="chains" value="A=24-40"/>
</dbReference>
<dbReference type="PDB" id="2MDB">
    <property type="method" value="NMR"/>
    <property type="chains" value="A=24-40"/>
</dbReference>
<dbReference type="PDB" id="2RTV">
    <property type="method" value="NMR"/>
    <property type="chains" value="A=24-40"/>
</dbReference>
<dbReference type="PDB" id="6PIN">
    <property type="method" value="NMR"/>
    <property type="chains" value="A=24-41"/>
</dbReference>
<dbReference type="PDBsum" id="1MA2"/>
<dbReference type="PDBsum" id="1MA4"/>
<dbReference type="PDBsum" id="1MA5"/>
<dbReference type="PDBsum" id="1MA6"/>
<dbReference type="PDBsum" id="1WO0"/>
<dbReference type="PDBsum" id="1WO1"/>
<dbReference type="PDBsum" id="2MDB"/>
<dbReference type="PDBsum" id="2RTV"/>
<dbReference type="PDBsum" id="6PIN"/>
<dbReference type="BMRB" id="P14213"/>
<dbReference type="SMR" id="P14213"/>
<dbReference type="TCDB" id="1.C.34.1.1">
    <property type="family name" value="the tachyplesin (tachyplesin) family"/>
</dbReference>
<dbReference type="EvolutionaryTrace" id="P14213"/>
<dbReference type="GO" id="GO:0005576">
    <property type="term" value="C:extracellular region"/>
    <property type="evidence" value="ECO:0007669"/>
    <property type="project" value="UniProtKB-SubCell"/>
</dbReference>
<dbReference type="GO" id="GO:0042742">
    <property type="term" value="P:defense response to bacterium"/>
    <property type="evidence" value="ECO:0007669"/>
    <property type="project" value="UniProtKB-KW"/>
</dbReference>
<evidence type="ECO:0000269" key="1">
    <source>
    </source>
</evidence>
<evidence type="ECO:0000305" key="2"/>
<evidence type="ECO:0007829" key="3">
    <source>
        <dbReference type="PDB" id="1MA2"/>
    </source>
</evidence>
<keyword id="KW-0002">3D-structure</keyword>
<keyword id="KW-0027">Amidation</keyword>
<keyword id="KW-0044">Antibiotic</keyword>
<keyword id="KW-0929">Antimicrobial</keyword>
<keyword id="KW-0165">Cleavage on pair of basic residues</keyword>
<keyword id="KW-0903">Direct protein sequencing</keyword>
<keyword id="KW-1015">Disulfide bond</keyword>
<keyword id="KW-0964">Secreted</keyword>
<keyword id="KW-0732">Signal</keyword>
<comment type="function">
    <text>Significantly inhibits the growth of Gram-negative and Gram-positive bacteria.</text>
</comment>
<comment type="subcellular location">
    <subcellularLocation>
        <location>Secreted</location>
    </subcellularLocation>
    <text>S-granules.</text>
</comment>
<comment type="tissue specificity">
    <text>Hemocytes.</text>
</comment>
<comment type="similarity">
    <text evidence="2">Belongs to the tachyplesin/polyphemusin family.</text>
</comment>
<organism>
    <name type="scientific">Tachypleus tridentatus</name>
    <name type="common">Japanese horseshoe crab</name>
    <dbReference type="NCBI Taxonomy" id="6853"/>
    <lineage>
        <taxon>Eukaryota</taxon>
        <taxon>Metazoa</taxon>
        <taxon>Ecdysozoa</taxon>
        <taxon>Arthropoda</taxon>
        <taxon>Chelicerata</taxon>
        <taxon>Merostomata</taxon>
        <taxon>Xiphosura</taxon>
        <taxon>Limulidae</taxon>
        <taxon>Tachypleus</taxon>
    </lineage>
</organism>
<accession>P14213</accession>
<name>TAC1_TACTR</name>